<comment type="function">
    <text evidence="1">Major role in the synthesis of nucleoside triphosphates other than ATP. The ATP gamma phosphate is transferred to the NDP beta phosphate via a ping-pong mechanism, using a phosphorylated active-site intermediate.</text>
</comment>
<comment type="catalytic activity">
    <reaction evidence="1">
        <text>a 2'-deoxyribonucleoside 5'-diphosphate + ATP = a 2'-deoxyribonucleoside 5'-triphosphate + ADP</text>
        <dbReference type="Rhea" id="RHEA:44640"/>
        <dbReference type="ChEBI" id="CHEBI:30616"/>
        <dbReference type="ChEBI" id="CHEBI:61560"/>
        <dbReference type="ChEBI" id="CHEBI:73316"/>
        <dbReference type="ChEBI" id="CHEBI:456216"/>
        <dbReference type="EC" id="2.7.4.6"/>
    </reaction>
</comment>
<comment type="catalytic activity">
    <reaction evidence="1">
        <text>a ribonucleoside 5'-diphosphate + ATP = a ribonucleoside 5'-triphosphate + ADP</text>
        <dbReference type="Rhea" id="RHEA:18113"/>
        <dbReference type="ChEBI" id="CHEBI:30616"/>
        <dbReference type="ChEBI" id="CHEBI:57930"/>
        <dbReference type="ChEBI" id="CHEBI:61557"/>
        <dbReference type="ChEBI" id="CHEBI:456216"/>
        <dbReference type="EC" id="2.7.4.6"/>
    </reaction>
</comment>
<comment type="cofactor">
    <cofactor evidence="1">
        <name>Mg(2+)</name>
        <dbReference type="ChEBI" id="CHEBI:18420"/>
    </cofactor>
</comment>
<comment type="subunit">
    <text evidence="1">Homotetramer.</text>
</comment>
<comment type="subcellular location">
    <subcellularLocation>
        <location evidence="1">Cytoplasm</location>
    </subcellularLocation>
</comment>
<comment type="similarity">
    <text evidence="1">Belongs to the NDK family.</text>
</comment>
<protein>
    <recommendedName>
        <fullName evidence="1">Nucleoside diphosphate kinase</fullName>
        <shortName evidence="1">NDK</shortName>
        <shortName evidence="1">NDP kinase</shortName>
        <ecNumber evidence="1">2.7.4.6</ecNumber>
    </recommendedName>
    <alternativeName>
        <fullName evidence="1">Nucleoside-2-P kinase</fullName>
    </alternativeName>
</protein>
<sequence>MLERTFSIIKPDAVKRNLIGQIVSKLEQNGLKVIASKMVFLTVQEAKGFYAEHDGKPFFDTLIKNMTAGPIVVQVLEGDDAIAKNREIMGPTDPENAPAGSIRKEYAISMQQNSVHGSDSPESAQREISYFFSEIEVFSAS</sequence>
<gene>
    <name evidence="1" type="primary">ndk</name>
    <name type="ordered locus">Tcr_0619</name>
</gene>
<dbReference type="EC" id="2.7.4.6" evidence="1"/>
<dbReference type="EMBL" id="CP000109">
    <property type="protein sequence ID" value="ABB41215.1"/>
    <property type="molecule type" value="Genomic_DNA"/>
</dbReference>
<dbReference type="SMR" id="Q31I08"/>
<dbReference type="STRING" id="317025.Tcr_0619"/>
<dbReference type="KEGG" id="tcx:Tcr_0619"/>
<dbReference type="eggNOG" id="COG0105">
    <property type="taxonomic scope" value="Bacteria"/>
</dbReference>
<dbReference type="HOGENOM" id="CLU_060216_8_1_6"/>
<dbReference type="OrthoDB" id="9801161at2"/>
<dbReference type="GO" id="GO:0005737">
    <property type="term" value="C:cytoplasm"/>
    <property type="evidence" value="ECO:0007669"/>
    <property type="project" value="UniProtKB-SubCell"/>
</dbReference>
<dbReference type="GO" id="GO:0005524">
    <property type="term" value="F:ATP binding"/>
    <property type="evidence" value="ECO:0007669"/>
    <property type="project" value="UniProtKB-UniRule"/>
</dbReference>
<dbReference type="GO" id="GO:0046872">
    <property type="term" value="F:metal ion binding"/>
    <property type="evidence" value="ECO:0007669"/>
    <property type="project" value="UniProtKB-KW"/>
</dbReference>
<dbReference type="GO" id="GO:0004550">
    <property type="term" value="F:nucleoside diphosphate kinase activity"/>
    <property type="evidence" value="ECO:0007669"/>
    <property type="project" value="UniProtKB-UniRule"/>
</dbReference>
<dbReference type="GO" id="GO:0006241">
    <property type="term" value="P:CTP biosynthetic process"/>
    <property type="evidence" value="ECO:0007669"/>
    <property type="project" value="UniProtKB-UniRule"/>
</dbReference>
<dbReference type="GO" id="GO:0006183">
    <property type="term" value="P:GTP biosynthetic process"/>
    <property type="evidence" value="ECO:0007669"/>
    <property type="project" value="UniProtKB-UniRule"/>
</dbReference>
<dbReference type="GO" id="GO:0006228">
    <property type="term" value="P:UTP biosynthetic process"/>
    <property type="evidence" value="ECO:0007669"/>
    <property type="project" value="UniProtKB-UniRule"/>
</dbReference>
<dbReference type="CDD" id="cd04413">
    <property type="entry name" value="NDPk_I"/>
    <property type="match status" value="1"/>
</dbReference>
<dbReference type="FunFam" id="3.30.70.141:FF:000001">
    <property type="entry name" value="Nucleoside diphosphate kinase"/>
    <property type="match status" value="1"/>
</dbReference>
<dbReference type="Gene3D" id="3.30.70.141">
    <property type="entry name" value="Nucleoside diphosphate kinase-like domain"/>
    <property type="match status" value="1"/>
</dbReference>
<dbReference type="HAMAP" id="MF_00451">
    <property type="entry name" value="NDP_kinase"/>
    <property type="match status" value="1"/>
</dbReference>
<dbReference type="InterPro" id="IPR034907">
    <property type="entry name" value="NDK-like_dom"/>
</dbReference>
<dbReference type="InterPro" id="IPR036850">
    <property type="entry name" value="NDK-like_dom_sf"/>
</dbReference>
<dbReference type="InterPro" id="IPR001564">
    <property type="entry name" value="Nucleoside_diP_kinase"/>
</dbReference>
<dbReference type="InterPro" id="IPR023005">
    <property type="entry name" value="Nucleoside_diP_kinase_AS"/>
</dbReference>
<dbReference type="NCBIfam" id="NF001908">
    <property type="entry name" value="PRK00668.1"/>
    <property type="match status" value="1"/>
</dbReference>
<dbReference type="PANTHER" id="PTHR46161">
    <property type="entry name" value="NUCLEOSIDE DIPHOSPHATE KINASE"/>
    <property type="match status" value="1"/>
</dbReference>
<dbReference type="PANTHER" id="PTHR46161:SF3">
    <property type="entry name" value="NUCLEOSIDE DIPHOSPHATE KINASE DDB_G0292928-RELATED"/>
    <property type="match status" value="1"/>
</dbReference>
<dbReference type="Pfam" id="PF00334">
    <property type="entry name" value="NDK"/>
    <property type="match status" value="1"/>
</dbReference>
<dbReference type="PRINTS" id="PR01243">
    <property type="entry name" value="NUCDPKINASE"/>
</dbReference>
<dbReference type="SMART" id="SM00562">
    <property type="entry name" value="NDK"/>
    <property type="match status" value="1"/>
</dbReference>
<dbReference type="SUPFAM" id="SSF54919">
    <property type="entry name" value="Nucleoside diphosphate kinase, NDK"/>
    <property type="match status" value="1"/>
</dbReference>
<dbReference type="PROSITE" id="PS00469">
    <property type="entry name" value="NDPK"/>
    <property type="match status" value="1"/>
</dbReference>
<dbReference type="PROSITE" id="PS51374">
    <property type="entry name" value="NDPK_LIKE"/>
    <property type="match status" value="1"/>
</dbReference>
<reference key="1">
    <citation type="journal article" date="2006" name="PLoS Biol.">
        <title>The genome of deep-sea vent chemolithoautotroph Thiomicrospira crunogena XCL-2.</title>
        <authorList>
            <person name="Scott K.M."/>
            <person name="Sievert S.M."/>
            <person name="Abril F.N."/>
            <person name="Ball L.A."/>
            <person name="Barrett C.J."/>
            <person name="Blake R.A."/>
            <person name="Boller A.J."/>
            <person name="Chain P.S.G."/>
            <person name="Clark J.A."/>
            <person name="Davis C.R."/>
            <person name="Detter C."/>
            <person name="Do K.F."/>
            <person name="Dobrinski K.P."/>
            <person name="Faza B.I."/>
            <person name="Fitzpatrick K.A."/>
            <person name="Freyermuth S.K."/>
            <person name="Harmer T.L."/>
            <person name="Hauser L.J."/>
            <person name="Huegler M."/>
            <person name="Kerfeld C.A."/>
            <person name="Klotz M.G."/>
            <person name="Kong W.W."/>
            <person name="Land M."/>
            <person name="Lapidus A."/>
            <person name="Larimer F.W."/>
            <person name="Longo D.L."/>
            <person name="Lucas S."/>
            <person name="Malfatti S.A."/>
            <person name="Massey S.E."/>
            <person name="Martin D.D."/>
            <person name="McCuddin Z."/>
            <person name="Meyer F."/>
            <person name="Moore J.L."/>
            <person name="Ocampo L.H. Jr."/>
            <person name="Paul J.H."/>
            <person name="Paulsen I.T."/>
            <person name="Reep D.K."/>
            <person name="Ren Q."/>
            <person name="Ross R.L."/>
            <person name="Sato P.Y."/>
            <person name="Thomas P."/>
            <person name="Tinkham L.E."/>
            <person name="Zeruth G.T."/>
        </authorList>
    </citation>
    <scope>NUCLEOTIDE SEQUENCE [LARGE SCALE GENOMIC DNA]</scope>
    <source>
        <strain>DSM 25203 / XCL-2</strain>
    </source>
</reference>
<keyword id="KW-0067">ATP-binding</keyword>
<keyword id="KW-0963">Cytoplasm</keyword>
<keyword id="KW-0418">Kinase</keyword>
<keyword id="KW-0460">Magnesium</keyword>
<keyword id="KW-0479">Metal-binding</keyword>
<keyword id="KW-0546">Nucleotide metabolism</keyword>
<keyword id="KW-0547">Nucleotide-binding</keyword>
<keyword id="KW-0597">Phosphoprotein</keyword>
<keyword id="KW-0808">Transferase</keyword>
<feature type="chain" id="PRO_0000242523" description="Nucleoside diphosphate kinase">
    <location>
        <begin position="1"/>
        <end position="141"/>
    </location>
</feature>
<feature type="active site" description="Pros-phosphohistidine intermediate" evidence="1">
    <location>
        <position position="116"/>
    </location>
</feature>
<feature type="binding site" evidence="1">
    <location>
        <position position="10"/>
    </location>
    <ligand>
        <name>ATP</name>
        <dbReference type="ChEBI" id="CHEBI:30616"/>
    </ligand>
</feature>
<feature type="binding site" evidence="1">
    <location>
        <position position="58"/>
    </location>
    <ligand>
        <name>ATP</name>
        <dbReference type="ChEBI" id="CHEBI:30616"/>
    </ligand>
</feature>
<feature type="binding site" evidence="1">
    <location>
        <position position="86"/>
    </location>
    <ligand>
        <name>ATP</name>
        <dbReference type="ChEBI" id="CHEBI:30616"/>
    </ligand>
</feature>
<feature type="binding site" evidence="1">
    <location>
        <position position="92"/>
    </location>
    <ligand>
        <name>ATP</name>
        <dbReference type="ChEBI" id="CHEBI:30616"/>
    </ligand>
</feature>
<feature type="binding site" evidence="1">
    <location>
        <position position="103"/>
    </location>
    <ligand>
        <name>ATP</name>
        <dbReference type="ChEBI" id="CHEBI:30616"/>
    </ligand>
</feature>
<feature type="binding site" evidence="1">
    <location>
        <position position="113"/>
    </location>
    <ligand>
        <name>ATP</name>
        <dbReference type="ChEBI" id="CHEBI:30616"/>
    </ligand>
</feature>
<evidence type="ECO:0000255" key="1">
    <source>
        <dbReference type="HAMAP-Rule" id="MF_00451"/>
    </source>
</evidence>
<organism>
    <name type="scientific">Hydrogenovibrio crunogenus (strain DSM 25203 / XCL-2)</name>
    <name type="common">Thiomicrospira crunogena</name>
    <dbReference type="NCBI Taxonomy" id="317025"/>
    <lineage>
        <taxon>Bacteria</taxon>
        <taxon>Pseudomonadati</taxon>
        <taxon>Pseudomonadota</taxon>
        <taxon>Gammaproteobacteria</taxon>
        <taxon>Thiotrichales</taxon>
        <taxon>Piscirickettsiaceae</taxon>
        <taxon>Hydrogenovibrio</taxon>
    </lineage>
</organism>
<proteinExistence type="inferred from homology"/>
<name>NDK_HYDCU</name>
<accession>Q31I08</accession>